<feature type="chain" id="PRO_1000164213" description="Protein GrpE">
    <location>
        <begin position="1"/>
        <end position="184"/>
    </location>
</feature>
<feature type="region of interest" description="Disordered" evidence="2">
    <location>
        <begin position="1"/>
        <end position="22"/>
    </location>
</feature>
<feature type="compositionally biased region" description="Basic and acidic residues" evidence="2">
    <location>
        <begin position="1"/>
        <end position="12"/>
    </location>
</feature>
<dbReference type="EMBL" id="CP000949">
    <property type="protein sequence ID" value="ACA71209.1"/>
    <property type="molecule type" value="Genomic_DNA"/>
</dbReference>
<dbReference type="SMR" id="B1J253"/>
<dbReference type="STRING" id="390235.PputW619_0704"/>
<dbReference type="KEGG" id="ppw:PputW619_0704"/>
<dbReference type="eggNOG" id="COG0576">
    <property type="taxonomic scope" value="Bacteria"/>
</dbReference>
<dbReference type="HOGENOM" id="CLU_057217_6_0_6"/>
<dbReference type="OrthoDB" id="9789811at2"/>
<dbReference type="GO" id="GO:0005829">
    <property type="term" value="C:cytosol"/>
    <property type="evidence" value="ECO:0007669"/>
    <property type="project" value="TreeGrafter"/>
</dbReference>
<dbReference type="GO" id="GO:0000774">
    <property type="term" value="F:adenyl-nucleotide exchange factor activity"/>
    <property type="evidence" value="ECO:0007669"/>
    <property type="project" value="InterPro"/>
</dbReference>
<dbReference type="GO" id="GO:0042803">
    <property type="term" value="F:protein homodimerization activity"/>
    <property type="evidence" value="ECO:0007669"/>
    <property type="project" value="InterPro"/>
</dbReference>
<dbReference type="GO" id="GO:0051087">
    <property type="term" value="F:protein-folding chaperone binding"/>
    <property type="evidence" value="ECO:0007669"/>
    <property type="project" value="InterPro"/>
</dbReference>
<dbReference type="GO" id="GO:0051082">
    <property type="term" value="F:unfolded protein binding"/>
    <property type="evidence" value="ECO:0007669"/>
    <property type="project" value="TreeGrafter"/>
</dbReference>
<dbReference type="GO" id="GO:0006457">
    <property type="term" value="P:protein folding"/>
    <property type="evidence" value="ECO:0007669"/>
    <property type="project" value="InterPro"/>
</dbReference>
<dbReference type="CDD" id="cd00446">
    <property type="entry name" value="GrpE"/>
    <property type="match status" value="1"/>
</dbReference>
<dbReference type="FunFam" id="2.30.22.10:FF:000001">
    <property type="entry name" value="Protein GrpE"/>
    <property type="match status" value="1"/>
</dbReference>
<dbReference type="Gene3D" id="3.90.20.20">
    <property type="match status" value="1"/>
</dbReference>
<dbReference type="Gene3D" id="2.30.22.10">
    <property type="entry name" value="Head domain of nucleotide exchange factor GrpE"/>
    <property type="match status" value="1"/>
</dbReference>
<dbReference type="HAMAP" id="MF_01151">
    <property type="entry name" value="GrpE"/>
    <property type="match status" value="1"/>
</dbReference>
<dbReference type="InterPro" id="IPR000740">
    <property type="entry name" value="GrpE"/>
</dbReference>
<dbReference type="InterPro" id="IPR013805">
    <property type="entry name" value="GrpE_coiled_coil"/>
</dbReference>
<dbReference type="InterPro" id="IPR009012">
    <property type="entry name" value="GrpE_head"/>
</dbReference>
<dbReference type="NCBIfam" id="NF010737">
    <property type="entry name" value="PRK14139.1"/>
    <property type="match status" value="1"/>
</dbReference>
<dbReference type="NCBIfam" id="NF010738">
    <property type="entry name" value="PRK14140.1"/>
    <property type="match status" value="1"/>
</dbReference>
<dbReference type="NCBIfam" id="NF010748">
    <property type="entry name" value="PRK14150.1"/>
    <property type="match status" value="1"/>
</dbReference>
<dbReference type="NCBIfam" id="NF010749">
    <property type="entry name" value="PRK14151.1"/>
    <property type="match status" value="1"/>
</dbReference>
<dbReference type="PANTHER" id="PTHR21237">
    <property type="entry name" value="GRPE PROTEIN"/>
    <property type="match status" value="1"/>
</dbReference>
<dbReference type="PANTHER" id="PTHR21237:SF23">
    <property type="entry name" value="GRPE PROTEIN HOMOLOG, MITOCHONDRIAL"/>
    <property type="match status" value="1"/>
</dbReference>
<dbReference type="Pfam" id="PF01025">
    <property type="entry name" value="GrpE"/>
    <property type="match status" value="1"/>
</dbReference>
<dbReference type="PRINTS" id="PR00773">
    <property type="entry name" value="GRPEPROTEIN"/>
</dbReference>
<dbReference type="SUPFAM" id="SSF58014">
    <property type="entry name" value="Coiled-coil domain of nucleotide exchange factor GrpE"/>
    <property type="match status" value="1"/>
</dbReference>
<dbReference type="SUPFAM" id="SSF51064">
    <property type="entry name" value="Head domain of nucleotide exchange factor GrpE"/>
    <property type="match status" value="1"/>
</dbReference>
<dbReference type="PROSITE" id="PS01071">
    <property type="entry name" value="GRPE"/>
    <property type="match status" value="1"/>
</dbReference>
<proteinExistence type="inferred from homology"/>
<protein>
    <recommendedName>
        <fullName evidence="1">Protein GrpE</fullName>
    </recommendedName>
    <alternativeName>
        <fullName evidence="1">HSP-70 cofactor</fullName>
    </alternativeName>
</protein>
<sequence length="184" mass="20378">MADEQLNEKDLNAEEAGAVDNGARVQELEEQLAAAKDQSLRAVADLQNVRRRAEQDVEKAHKFALEKFAGDLLPVIDSLELALAHSSAEDEQVKKIREGVELTLKMFQDTLKRYNLEAIDPHGQPFNAEHHQAMAMQESAEVEPNSVLNVFQKGYLLNGRLLRPAMVVVSKAPSAPQPSIDEKA</sequence>
<name>GRPE_PSEPW</name>
<accession>B1J253</accession>
<reference key="1">
    <citation type="submission" date="2008-02" db="EMBL/GenBank/DDBJ databases">
        <title>Complete sequence of Pseudomonas putida W619.</title>
        <authorList>
            <person name="Copeland A."/>
            <person name="Lucas S."/>
            <person name="Lapidus A."/>
            <person name="Barry K."/>
            <person name="Detter J.C."/>
            <person name="Glavina del Rio T."/>
            <person name="Dalin E."/>
            <person name="Tice H."/>
            <person name="Pitluck S."/>
            <person name="Chain P."/>
            <person name="Malfatti S."/>
            <person name="Shin M."/>
            <person name="Vergez L."/>
            <person name="Schmutz J."/>
            <person name="Larimer F."/>
            <person name="Land M."/>
            <person name="Hauser L."/>
            <person name="Kyrpides N."/>
            <person name="Kim E."/>
            <person name="Taghavi S."/>
            <person name="Vangronsveld D."/>
            <person name="van der Lelie D."/>
            <person name="Richardson P."/>
        </authorList>
    </citation>
    <scope>NUCLEOTIDE SEQUENCE [LARGE SCALE GENOMIC DNA]</scope>
    <source>
        <strain>W619</strain>
    </source>
</reference>
<evidence type="ECO:0000255" key="1">
    <source>
        <dbReference type="HAMAP-Rule" id="MF_01151"/>
    </source>
</evidence>
<evidence type="ECO:0000256" key="2">
    <source>
        <dbReference type="SAM" id="MobiDB-lite"/>
    </source>
</evidence>
<organism>
    <name type="scientific">Pseudomonas putida (strain W619)</name>
    <dbReference type="NCBI Taxonomy" id="390235"/>
    <lineage>
        <taxon>Bacteria</taxon>
        <taxon>Pseudomonadati</taxon>
        <taxon>Pseudomonadota</taxon>
        <taxon>Gammaproteobacteria</taxon>
        <taxon>Pseudomonadales</taxon>
        <taxon>Pseudomonadaceae</taxon>
        <taxon>Pseudomonas</taxon>
    </lineage>
</organism>
<comment type="function">
    <text evidence="1">Participates actively in the response to hyperosmotic and heat shock by preventing the aggregation of stress-denatured proteins, in association with DnaK and GrpE. It is the nucleotide exchange factor for DnaK and may function as a thermosensor. Unfolded proteins bind initially to DnaJ; upon interaction with the DnaJ-bound protein, DnaK hydrolyzes its bound ATP, resulting in the formation of a stable complex. GrpE releases ADP from DnaK; ATP binding to DnaK triggers the release of the substrate protein, thus completing the reaction cycle. Several rounds of ATP-dependent interactions between DnaJ, DnaK and GrpE are required for fully efficient folding.</text>
</comment>
<comment type="subunit">
    <text evidence="1">Homodimer.</text>
</comment>
<comment type="subcellular location">
    <subcellularLocation>
        <location evidence="1">Cytoplasm</location>
    </subcellularLocation>
</comment>
<comment type="similarity">
    <text evidence="1">Belongs to the GrpE family.</text>
</comment>
<keyword id="KW-0143">Chaperone</keyword>
<keyword id="KW-0963">Cytoplasm</keyword>
<keyword id="KW-0346">Stress response</keyword>
<gene>
    <name evidence="1" type="primary">grpE</name>
    <name type="ordered locus">PputW619_0704</name>
</gene>